<organism>
    <name type="scientific">Rhodopirellula baltica (strain DSM 10527 / NCIMB 13988 / SH1)</name>
    <dbReference type="NCBI Taxonomy" id="243090"/>
    <lineage>
        <taxon>Bacteria</taxon>
        <taxon>Pseudomonadati</taxon>
        <taxon>Planctomycetota</taxon>
        <taxon>Planctomycetia</taxon>
        <taxon>Pirellulales</taxon>
        <taxon>Pirellulaceae</taxon>
        <taxon>Rhodopirellula</taxon>
    </lineage>
</organism>
<keyword id="KW-0963">Cytoplasm</keyword>
<keyword id="KW-1185">Reference proteome</keyword>
<keyword id="KW-0704">Schiff base</keyword>
<keyword id="KW-0784">Thiamine biosynthesis</keyword>
<keyword id="KW-0808">Transferase</keyword>
<evidence type="ECO:0000255" key="1">
    <source>
        <dbReference type="HAMAP-Rule" id="MF_00443"/>
    </source>
</evidence>
<evidence type="ECO:0000256" key="2">
    <source>
        <dbReference type="SAM" id="MobiDB-lite"/>
    </source>
</evidence>
<comment type="function">
    <text evidence="1">Catalyzes the rearrangement of 1-deoxy-D-xylulose 5-phosphate (DXP) to produce the thiazole phosphate moiety of thiamine. Sulfur is provided by the thiocarboxylate moiety of the carrier protein ThiS. In vitro, sulfur can be provided by H(2)S.</text>
</comment>
<comment type="catalytic activity">
    <reaction evidence="1">
        <text>[ThiS sulfur-carrier protein]-C-terminal-Gly-aminoethanethioate + 2-iminoacetate + 1-deoxy-D-xylulose 5-phosphate = [ThiS sulfur-carrier protein]-C-terminal Gly-Gly + 2-[(2R,5Z)-2-carboxy-4-methylthiazol-5(2H)-ylidene]ethyl phosphate + 2 H2O + H(+)</text>
        <dbReference type="Rhea" id="RHEA:26297"/>
        <dbReference type="Rhea" id="RHEA-COMP:12909"/>
        <dbReference type="Rhea" id="RHEA-COMP:19908"/>
        <dbReference type="ChEBI" id="CHEBI:15377"/>
        <dbReference type="ChEBI" id="CHEBI:15378"/>
        <dbReference type="ChEBI" id="CHEBI:57792"/>
        <dbReference type="ChEBI" id="CHEBI:62899"/>
        <dbReference type="ChEBI" id="CHEBI:77846"/>
        <dbReference type="ChEBI" id="CHEBI:90778"/>
        <dbReference type="ChEBI" id="CHEBI:232372"/>
        <dbReference type="EC" id="2.8.1.10"/>
    </reaction>
</comment>
<comment type="pathway">
    <text evidence="1">Cofactor biosynthesis; thiamine diphosphate biosynthesis.</text>
</comment>
<comment type="subunit">
    <text evidence="1">Homotetramer. Forms heterodimers with either ThiH or ThiS.</text>
</comment>
<comment type="subcellular location">
    <subcellularLocation>
        <location evidence="1">Cytoplasm</location>
    </subcellularLocation>
</comment>
<comment type="similarity">
    <text evidence="1">Belongs to the ThiG family.</text>
</comment>
<accession>Q7US84</accession>
<proteinExistence type="inferred from homology"/>
<reference key="1">
    <citation type="journal article" date="2003" name="Proc. Natl. Acad. Sci. U.S.A.">
        <title>Complete genome sequence of the marine planctomycete Pirellula sp. strain 1.</title>
        <authorList>
            <person name="Gloeckner F.O."/>
            <person name="Kube M."/>
            <person name="Bauer M."/>
            <person name="Teeling H."/>
            <person name="Lombardot T."/>
            <person name="Ludwig W."/>
            <person name="Gade D."/>
            <person name="Beck A."/>
            <person name="Borzym K."/>
            <person name="Heitmann K."/>
            <person name="Rabus R."/>
            <person name="Schlesner H."/>
            <person name="Amann R."/>
            <person name="Reinhardt R."/>
        </authorList>
    </citation>
    <scope>NUCLEOTIDE SEQUENCE [LARGE SCALE GENOMIC DNA]</scope>
    <source>
        <strain>DSM 10527 / NCIMB 13988 / SH1</strain>
    </source>
</reference>
<dbReference type="EC" id="2.8.1.10" evidence="1"/>
<dbReference type="EMBL" id="BX294140">
    <property type="protein sequence ID" value="CAD73913.1"/>
    <property type="molecule type" value="Genomic_DNA"/>
</dbReference>
<dbReference type="RefSeq" id="NP_866227.1">
    <property type="nucleotide sequence ID" value="NC_005027.1"/>
</dbReference>
<dbReference type="RefSeq" id="WP_011120018.1">
    <property type="nucleotide sequence ID" value="NC_005027.1"/>
</dbReference>
<dbReference type="SMR" id="Q7US84"/>
<dbReference type="FunCoup" id="Q7US84">
    <property type="interactions" value="311"/>
</dbReference>
<dbReference type="STRING" id="243090.RB4651"/>
<dbReference type="EnsemblBacteria" id="CAD73913">
    <property type="protein sequence ID" value="CAD73913"/>
    <property type="gene ID" value="RB4651"/>
</dbReference>
<dbReference type="KEGG" id="rba:RB4651"/>
<dbReference type="PATRIC" id="fig|243090.15.peg.2181"/>
<dbReference type="eggNOG" id="COG2022">
    <property type="taxonomic scope" value="Bacteria"/>
</dbReference>
<dbReference type="HOGENOM" id="CLU_062233_1_1_0"/>
<dbReference type="InParanoid" id="Q7US84"/>
<dbReference type="OrthoDB" id="9805935at2"/>
<dbReference type="UniPathway" id="UPA00060"/>
<dbReference type="Proteomes" id="UP000001025">
    <property type="component" value="Chromosome"/>
</dbReference>
<dbReference type="GO" id="GO:1902508">
    <property type="term" value="C:2-iminoacetate synthase complex"/>
    <property type="evidence" value="ECO:0000318"/>
    <property type="project" value="GO_Central"/>
</dbReference>
<dbReference type="GO" id="GO:0005737">
    <property type="term" value="C:cytoplasm"/>
    <property type="evidence" value="ECO:0007669"/>
    <property type="project" value="UniProtKB-SubCell"/>
</dbReference>
<dbReference type="GO" id="GO:1990107">
    <property type="term" value="F:thiazole synthase activity"/>
    <property type="evidence" value="ECO:0007669"/>
    <property type="project" value="UniProtKB-EC"/>
</dbReference>
<dbReference type="GO" id="GO:0009228">
    <property type="term" value="P:thiamine biosynthetic process"/>
    <property type="evidence" value="ECO:0000318"/>
    <property type="project" value="GO_Central"/>
</dbReference>
<dbReference type="GO" id="GO:0009229">
    <property type="term" value="P:thiamine diphosphate biosynthetic process"/>
    <property type="evidence" value="ECO:0000318"/>
    <property type="project" value="GO_Central"/>
</dbReference>
<dbReference type="CDD" id="cd04728">
    <property type="entry name" value="ThiG"/>
    <property type="match status" value="1"/>
</dbReference>
<dbReference type="Gene3D" id="3.20.20.70">
    <property type="entry name" value="Aldolase class I"/>
    <property type="match status" value="1"/>
</dbReference>
<dbReference type="HAMAP" id="MF_00443">
    <property type="entry name" value="ThiG"/>
    <property type="match status" value="1"/>
</dbReference>
<dbReference type="InterPro" id="IPR013785">
    <property type="entry name" value="Aldolase_TIM"/>
</dbReference>
<dbReference type="InterPro" id="IPR033983">
    <property type="entry name" value="Thiazole_synthase_ThiG"/>
</dbReference>
<dbReference type="InterPro" id="IPR008867">
    <property type="entry name" value="ThiG"/>
</dbReference>
<dbReference type="PANTHER" id="PTHR34266">
    <property type="entry name" value="THIAZOLE SYNTHASE"/>
    <property type="match status" value="1"/>
</dbReference>
<dbReference type="PANTHER" id="PTHR34266:SF2">
    <property type="entry name" value="THIAZOLE SYNTHASE"/>
    <property type="match status" value="1"/>
</dbReference>
<dbReference type="Pfam" id="PF05690">
    <property type="entry name" value="ThiG"/>
    <property type="match status" value="1"/>
</dbReference>
<dbReference type="SUPFAM" id="SSF110399">
    <property type="entry name" value="ThiG-like"/>
    <property type="match status" value="1"/>
</dbReference>
<sequence>MSTDALSDSPLKIGSHTLTSRLLVGTGRYDTMEQMRDSLDASGTECVTVAVRRERLYERTGQNILDFIDSDRYILLPNTAGCYTAADAVRAANLGREILRTLGNPGSDWVKLEVLGDSKTLLPDPVETVAACEQLAADGFSVLCYTSDCPVTAQRLKKVGAAAVMPAGSPIGSGAGILNPANLQIILEYLKEDDEDYPVIIDAGVGTASDVSVAMELGADGVLLNTAIAHAREPVRMAHAMRMAVDAGRHAALAGRIPKRLYGTASSPQEGVISTRPYGSQADEIGS</sequence>
<gene>
    <name evidence="1" type="primary">thiG</name>
    <name type="ordered locus">RB4651</name>
</gene>
<name>THIG_RHOBA</name>
<feature type="chain" id="PRO_0000162852" description="Thiazole synthase">
    <location>
        <begin position="1"/>
        <end position="287"/>
    </location>
</feature>
<feature type="region of interest" description="Disordered" evidence="2">
    <location>
        <begin position="268"/>
        <end position="287"/>
    </location>
</feature>
<feature type="active site" description="Schiff-base intermediate with DXP" evidence="1">
    <location>
        <position position="111"/>
    </location>
</feature>
<feature type="binding site" evidence="1">
    <location>
        <position position="172"/>
    </location>
    <ligand>
        <name>1-deoxy-D-xylulose 5-phosphate</name>
        <dbReference type="ChEBI" id="CHEBI:57792"/>
    </ligand>
</feature>
<feature type="binding site" evidence="1">
    <location>
        <begin position="203"/>
        <end position="204"/>
    </location>
    <ligand>
        <name>1-deoxy-D-xylulose 5-phosphate</name>
        <dbReference type="ChEBI" id="CHEBI:57792"/>
    </ligand>
</feature>
<feature type="binding site" evidence="1">
    <location>
        <begin position="225"/>
        <end position="226"/>
    </location>
    <ligand>
        <name>1-deoxy-D-xylulose 5-phosphate</name>
        <dbReference type="ChEBI" id="CHEBI:57792"/>
    </ligand>
</feature>
<protein>
    <recommendedName>
        <fullName evidence="1">Thiazole synthase</fullName>
        <ecNumber evidence="1">2.8.1.10</ecNumber>
    </recommendedName>
</protein>